<dbReference type="EMBL" id="AE017340">
    <property type="protein sequence ID" value="AAV81080.1"/>
    <property type="molecule type" value="Genomic_DNA"/>
</dbReference>
<dbReference type="RefSeq" id="WP_011233500.1">
    <property type="nucleotide sequence ID" value="NC_006512.1"/>
</dbReference>
<dbReference type="SMR" id="Q5QZB7"/>
<dbReference type="STRING" id="283942.IL0237"/>
<dbReference type="GeneID" id="41335383"/>
<dbReference type="KEGG" id="ilo:IL0237"/>
<dbReference type="eggNOG" id="COG1309">
    <property type="taxonomic scope" value="Bacteria"/>
</dbReference>
<dbReference type="HOGENOM" id="CLU_069356_5_0_6"/>
<dbReference type="OrthoDB" id="9179041at2"/>
<dbReference type="Proteomes" id="UP000001171">
    <property type="component" value="Chromosome"/>
</dbReference>
<dbReference type="GO" id="GO:0043590">
    <property type="term" value="C:bacterial nucleoid"/>
    <property type="evidence" value="ECO:0007669"/>
    <property type="project" value="UniProtKB-UniRule"/>
</dbReference>
<dbReference type="GO" id="GO:0005737">
    <property type="term" value="C:cytoplasm"/>
    <property type="evidence" value="ECO:0007669"/>
    <property type="project" value="UniProtKB-UniRule"/>
</dbReference>
<dbReference type="GO" id="GO:0043565">
    <property type="term" value="F:sequence-specific DNA binding"/>
    <property type="evidence" value="ECO:0007669"/>
    <property type="project" value="UniProtKB-UniRule"/>
</dbReference>
<dbReference type="GO" id="GO:0051301">
    <property type="term" value="P:cell division"/>
    <property type="evidence" value="ECO:0007669"/>
    <property type="project" value="UniProtKB-KW"/>
</dbReference>
<dbReference type="GO" id="GO:0010974">
    <property type="term" value="P:negative regulation of division septum assembly"/>
    <property type="evidence" value="ECO:0007669"/>
    <property type="project" value="InterPro"/>
</dbReference>
<dbReference type="Gene3D" id="1.10.357.10">
    <property type="entry name" value="Tetracycline Repressor, domain 2"/>
    <property type="match status" value="1"/>
</dbReference>
<dbReference type="HAMAP" id="MF_01839">
    <property type="entry name" value="NO_factor_SlmA"/>
    <property type="match status" value="1"/>
</dbReference>
<dbReference type="InterPro" id="IPR009057">
    <property type="entry name" value="Homeodomain-like_sf"/>
</dbReference>
<dbReference type="InterPro" id="IPR050624">
    <property type="entry name" value="HTH-type_Tx_Regulator"/>
</dbReference>
<dbReference type="InterPro" id="IPR001647">
    <property type="entry name" value="HTH_TetR"/>
</dbReference>
<dbReference type="InterPro" id="IPR023769">
    <property type="entry name" value="NO_SlmA"/>
</dbReference>
<dbReference type="InterPro" id="IPR054580">
    <property type="entry name" value="SlmA-like_C"/>
</dbReference>
<dbReference type="NCBIfam" id="NF007015">
    <property type="entry name" value="PRK09480.1"/>
    <property type="match status" value="1"/>
</dbReference>
<dbReference type="PANTHER" id="PTHR43479">
    <property type="entry name" value="ACREF/ENVCD OPERON REPRESSOR-RELATED"/>
    <property type="match status" value="1"/>
</dbReference>
<dbReference type="PANTHER" id="PTHR43479:SF11">
    <property type="entry name" value="ACREF_ENVCD OPERON REPRESSOR-RELATED"/>
    <property type="match status" value="1"/>
</dbReference>
<dbReference type="Pfam" id="PF22276">
    <property type="entry name" value="SlmA-like_C"/>
    <property type="match status" value="1"/>
</dbReference>
<dbReference type="Pfam" id="PF00440">
    <property type="entry name" value="TetR_N"/>
    <property type="match status" value="1"/>
</dbReference>
<dbReference type="SUPFAM" id="SSF46689">
    <property type="entry name" value="Homeodomain-like"/>
    <property type="match status" value="1"/>
</dbReference>
<dbReference type="PROSITE" id="PS50977">
    <property type="entry name" value="HTH_TETR_2"/>
    <property type="match status" value="1"/>
</dbReference>
<evidence type="ECO:0000255" key="1">
    <source>
        <dbReference type="HAMAP-Rule" id="MF_01839"/>
    </source>
</evidence>
<reference key="1">
    <citation type="journal article" date="2004" name="Proc. Natl. Acad. Sci. U.S.A.">
        <title>Genome sequence of the deep-sea gamma-proteobacterium Idiomarina loihiensis reveals amino acid fermentation as a source of carbon and energy.</title>
        <authorList>
            <person name="Hou S."/>
            <person name="Saw J.H."/>
            <person name="Lee K.S."/>
            <person name="Freitas T.A."/>
            <person name="Belisle C."/>
            <person name="Kawarabayasi Y."/>
            <person name="Donachie S.P."/>
            <person name="Pikina A."/>
            <person name="Galperin M.Y."/>
            <person name="Koonin E.V."/>
            <person name="Makarova K.S."/>
            <person name="Omelchenko M.V."/>
            <person name="Sorokin A."/>
            <person name="Wolf Y.I."/>
            <person name="Li Q.X."/>
            <person name="Keum Y.S."/>
            <person name="Campbell S."/>
            <person name="Denery J."/>
            <person name="Aizawa S."/>
            <person name="Shibata S."/>
            <person name="Malahoff A."/>
            <person name="Alam M."/>
        </authorList>
    </citation>
    <scope>NUCLEOTIDE SEQUENCE [LARGE SCALE GENOMIC DNA]</scope>
    <source>
        <strain>ATCC BAA-735 / DSM 15497 / L2-TR</strain>
    </source>
</reference>
<name>SLMA_IDILO</name>
<keyword id="KW-0131">Cell cycle</keyword>
<keyword id="KW-0132">Cell division</keyword>
<keyword id="KW-0175">Coiled coil</keyword>
<keyword id="KW-0963">Cytoplasm</keyword>
<keyword id="KW-0238">DNA-binding</keyword>
<keyword id="KW-1185">Reference proteome</keyword>
<comment type="function">
    <text evidence="1">Required for nucleoid occlusion (NO) phenomenon, which prevents Z-ring formation and cell division over the nucleoid. Acts as a DNA-associated cell division inhibitor that binds simultaneously chromosomal DNA and FtsZ, and disrupts the assembly of FtsZ polymers. SlmA-DNA-binding sequences (SBS) are dispersed on non-Ter regions of the chromosome, preventing FtsZ polymerization at these regions.</text>
</comment>
<comment type="subunit">
    <text evidence="1">Homodimer. Interacts with FtsZ.</text>
</comment>
<comment type="subcellular location">
    <subcellularLocation>
        <location evidence="1">Cytoplasm</location>
        <location evidence="1">Nucleoid</location>
    </subcellularLocation>
</comment>
<comment type="similarity">
    <text evidence="1">Belongs to the nucleoid occlusion factor SlmA family.</text>
</comment>
<proteinExistence type="inferred from homology"/>
<protein>
    <recommendedName>
        <fullName evidence="1">Nucleoid occlusion factor SlmA</fullName>
    </recommendedName>
</protein>
<organism>
    <name type="scientific">Idiomarina loihiensis (strain ATCC BAA-735 / DSM 15497 / L2-TR)</name>
    <dbReference type="NCBI Taxonomy" id="283942"/>
    <lineage>
        <taxon>Bacteria</taxon>
        <taxon>Pseudomonadati</taxon>
        <taxon>Pseudomonadota</taxon>
        <taxon>Gammaproteobacteria</taxon>
        <taxon>Alteromonadales</taxon>
        <taxon>Idiomarinaceae</taxon>
        <taxon>Idiomarina</taxon>
    </lineage>
</organism>
<accession>Q5QZB7</accession>
<gene>
    <name evidence="1" type="primary">slmA</name>
    <name type="ordered locus">IL0237</name>
</gene>
<sequence length="196" mass="22566">MAEQKRNRREEILQALAAMLETSPGQRITTAKLAANLGVSEAALYRHFPSKARMFEGLIEFVEDTLLTRINMIMDEEKNTLSRCHAILQLLLTFAERNPGITRVMTGDALMGEHDRLRGRMEDLFNRIESSIKQILREKAMREQQRFIVDEAVLANLLLSYADGKISQFVRSNFKRLPTEHFSAQWQVMEQQLISA</sequence>
<feature type="chain" id="PRO_0000198972" description="Nucleoid occlusion factor SlmA">
    <location>
        <begin position="1"/>
        <end position="196"/>
    </location>
</feature>
<feature type="domain" description="HTH tetR-type" evidence="1">
    <location>
        <begin position="6"/>
        <end position="66"/>
    </location>
</feature>
<feature type="DNA-binding region" description="H-T-H motif" evidence="1">
    <location>
        <begin position="29"/>
        <end position="48"/>
    </location>
</feature>
<feature type="coiled-coil region" evidence="1">
    <location>
        <begin position="108"/>
        <end position="135"/>
    </location>
</feature>